<evidence type="ECO:0000255" key="1">
    <source>
        <dbReference type="HAMAP-Rule" id="MF_00907"/>
    </source>
</evidence>
<comment type="function">
    <text evidence="1">Required for optimal enterobactin synthesis. Acts as a proofreading enzyme that prevents EntB misacylation by hydrolyzing the thioester bound existing between EntB and wrongly charged molecules.</text>
</comment>
<comment type="pathway">
    <text evidence="1">Siderophore biosynthesis; enterobactin biosynthesis.</text>
</comment>
<comment type="subunit">
    <text evidence="1">Homotetramer. Dimer of dimers. Interacts specifically with the aryl carrier protein (ArCP) domain of EntB.</text>
</comment>
<comment type="subcellular location">
    <subcellularLocation>
        <location evidence="1">Cytoplasm</location>
    </subcellularLocation>
</comment>
<comment type="similarity">
    <text evidence="1">Belongs to the thioesterase PaaI family.</text>
</comment>
<name>ENTH_SHISS</name>
<accession>Q3Z4J6</accession>
<proteinExistence type="inferred from homology"/>
<dbReference type="EC" id="3.1.2.-" evidence="1"/>
<dbReference type="EMBL" id="CP000038">
    <property type="protein sequence ID" value="AAZ87316.1"/>
    <property type="molecule type" value="Genomic_DNA"/>
</dbReference>
<dbReference type="RefSeq" id="WP_000637944.1">
    <property type="nucleotide sequence ID" value="NC_007384.1"/>
</dbReference>
<dbReference type="SMR" id="Q3Z4J6"/>
<dbReference type="KEGG" id="ssn:SSON_0548"/>
<dbReference type="HOGENOM" id="CLU_089876_13_1_6"/>
<dbReference type="UniPathway" id="UPA00017"/>
<dbReference type="Proteomes" id="UP000002529">
    <property type="component" value="Chromosome"/>
</dbReference>
<dbReference type="GO" id="GO:0005829">
    <property type="term" value="C:cytosol"/>
    <property type="evidence" value="ECO:0007669"/>
    <property type="project" value="TreeGrafter"/>
</dbReference>
<dbReference type="GO" id="GO:0061522">
    <property type="term" value="F:1,4-dihydroxy-2-naphthoyl-CoA thioesterase activity"/>
    <property type="evidence" value="ECO:0007669"/>
    <property type="project" value="TreeGrafter"/>
</dbReference>
<dbReference type="GO" id="GO:0009239">
    <property type="term" value="P:enterobactin biosynthetic process"/>
    <property type="evidence" value="ECO:0007669"/>
    <property type="project" value="UniProtKB-UniRule"/>
</dbReference>
<dbReference type="CDD" id="cd03443">
    <property type="entry name" value="PaaI_thioesterase"/>
    <property type="match status" value="1"/>
</dbReference>
<dbReference type="FunFam" id="3.10.129.10:FF:000002">
    <property type="entry name" value="1,4-dihydroxy-2-naphthoyl-CoA hydrolase"/>
    <property type="match status" value="1"/>
</dbReference>
<dbReference type="Gene3D" id="3.10.129.10">
    <property type="entry name" value="Hotdog Thioesterase"/>
    <property type="match status" value="1"/>
</dbReference>
<dbReference type="HAMAP" id="MF_00907">
    <property type="entry name" value="Thioesterase_EntH"/>
    <property type="match status" value="1"/>
</dbReference>
<dbReference type="InterPro" id="IPR029069">
    <property type="entry name" value="HotDog_dom_sf"/>
</dbReference>
<dbReference type="InterPro" id="IPR003736">
    <property type="entry name" value="PAAI_dom"/>
</dbReference>
<dbReference type="InterPro" id="IPR026576">
    <property type="entry name" value="Thioesterase_EntH"/>
</dbReference>
<dbReference type="InterPro" id="IPR006683">
    <property type="entry name" value="Thioestr_dom"/>
</dbReference>
<dbReference type="NCBIfam" id="NF007607">
    <property type="entry name" value="PRK10254.1"/>
    <property type="match status" value="1"/>
</dbReference>
<dbReference type="NCBIfam" id="TIGR00369">
    <property type="entry name" value="unchar_dom_1"/>
    <property type="match status" value="1"/>
</dbReference>
<dbReference type="PANTHER" id="PTHR43240">
    <property type="entry name" value="1,4-DIHYDROXY-2-NAPHTHOYL-COA THIOESTERASE 1"/>
    <property type="match status" value="1"/>
</dbReference>
<dbReference type="PANTHER" id="PTHR43240:SF9">
    <property type="entry name" value="PROOFREADING THIOESTERASE ENTH"/>
    <property type="match status" value="1"/>
</dbReference>
<dbReference type="Pfam" id="PF03061">
    <property type="entry name" value="4HBT"/>
    <property type="match status" value="1"/>
</dbReference>
<dbReference type="SUPFAM" id="SSF54637">
    <property type="entry name" value="Thioesterase/thiol ester dehydrase-isomerase"/>
    <property type="match status" value="1"/>
</dbReference>
<sequence>MIWKRHLTLDELNATSDNTMVAHLGIVYTRLGDDVLEAEMPVDTRTHQPFGLLHGGASAALAETLGSMAGFMMTRDGQCVVGTELNATHHRPMSEGKVRGVCQPLHLGRQNQSWEIIVFDEQGRRCCTCRLGTAVLG</sequence>
<protein>
    <recommendedName>
        <fullName evidence="1">Proofreading thioesterase EntH</fullName>
        <ecNumber evidence="1">3.1.2.-</ecNumber>
    </recommendedName>
    <alternativeName>
        <fullName evidence="1">Enterobactin synthase component H</fullName>
    </alternativeName>
</protein>
<keyword id="KW-0963">Cytoplasm</keyword>
<keyword id="KW-0378">Hydrolase</keyword>
<keyword id="KW-1185">Reference proteome</keyword>
<gene>
    <name evidence="1" type="primary">entH</name>
    <name type="ordered locus">SSON_0548</name>
</gene>
<feature type="chain" id="PRO_0000413879" description="Proofreading thioesterase EntH">
    <location>
        <begin position="1"/>
        <end position="137"/>
    </location>
</feature>
<feature type="active site" description="Nucleophile or proton acceptor" evidence="1">
    <location>
        <position position="63"/>
    </location>
</feature>
<reference key="1">
    <citation type="journal article" date="2005" name="Nucleic Acids Res.">
        <title>Genome dynamics and diversity of Shigella species, the etiologic agents of bacillary dysentery.</title>
        <authorList>
            <person name="Yang F."/>
            <person name="Yang J."/>
            <person name="Zhang X."/>
            <person name="Chen L."/>
            <person name="Jiang Y."/>
            <person name="Yan Y."/>
            <person name="Tang X."/>
            <person name="Wang J."/>
            <person name="Xiong Z."/>
            <person name="Dong J."/>
            <person name="Xue Y."/>
            <person name="Zhu Y."/>
            <person name="Xu X."/>
            <person name="Sun L."/>
            <person name="Chen S."/>
            <person name="Nie H."/>
            <person name="Peng J."/>
            <person name="Xu J."/>
            <person name="Wang Y."/>
            <person name="Yuan Z."/>
            <person name="Wen Y."/>
            <person name="Yao Z."/>
            <person name="Shen Y."/>
            <person name="Qiang B."/>
            <person name="Hou Y."/>
            <person name="Yu J."/>
            <person name="Jin Q."/>
        </authorList>
    </citation>
    <scope>NUCLEOTIDE SEQUENCE [LARGE SCALE GENOMIC DNA]</scope>
    <source>
        <strain>Ss046</strain>
    </source>
</reference>
<organism>
    <name type="scientific">Shigella sonnei (strain Ss046)</name>
    <dbReference type="NCBI Taxonomy" id="300269"/>
    <lineage>
        <taxon>Bacteria</taxon>
        <taxon>Pseudomonadati</taxon>
        <taxon>Pseudomonadota</taxon>
        <taxon>Gammaproteobacteria</taxon>
        <taxon>Enterobacterales</taxon>
        <taxon>Enterobacteriaceae</taxon>
        <taxon>Shigella</taxon>
    </lineage>
</organism>